<proteinExistence type="evidence at protein level"/>
<evidence type="ECO:0000255" key="1">
    <source>
        <dbReference type="HAMAP-Rule" id="MF_00377"/>
    </source>
</evidence>
<evidence type="ECO:0000305" key="2"/>
<evidence type="ECO:0000305" key="3">
    <source>
    </source>
</evidence>
<evidence type="ECO:0007744" key="4">
    <source>
        <dbReference type="PDB" id="2JMP"/>
    </source>
</evidence>
<evidence type="ECO:0007829" key="5">
    <source>
        <dbReference type="PDB" id="2JMP"/>
    </source>
</evidence>
<gene>
    <name evidence="1" type="primary">dnaA</name>
    <name type="ordered locus">MG469</name>
</gene>
<dbReference type="EMBL" id="L43967">
    <property type="protein sequence ID" value="AAC72490.1"/>
    <property type="molecule type" value="Genomic_DNA"/>
</dbReference>
<dbReference type="EMBL" id="U02259">
    <property type="protein sequence ID" value="AAD12524.1"/>
    <property type="molecule type" value="Genomic_DNA"/>
</dbReference>
<dbReference type="EMBL" id="U02145">
    <property type="protein sequence ID" value="AAD12425.1"/>
    <property type="molecule type" value="Genomic_DNA"/>
</dbReference>
<dbReference type="PIR" id="H64251">
    <property type="entry name" value="H64251"/>
</dbReference>
<dbReference type="RefSeq" id="WP_010869493.1">
    <property type="nucleotide sequence ID" value="NC_000908.2"/>
</dbReference>
<dbReference type="PDB" id="2JMP">
    <property type="method" value="NMR"/>
    <property type="chains" value="A=1-100"/>
</dbReference>
<dbReference type="PDBsum" id="2JMP"/>
<dbReference type="BMRB" id="P35888"/>
<dbReference type="SMR" id="P35888"/>
<dbReference type="FunCoup" id="P35888">
    <property type="interactions" value="114"/>
</dbReference>
<dbReference type="STRING" id="243273.MG_469"/>
<dbReference type="GeneID" id="88282651"/>
<dbReference type="KEGG" id="mge:MG_469"/>
<dbReference type="eggNOG" id="COG0593">
    <property type="taxonomic scope" value="Bacteria"/>
</dbReference>
<dbReference type="HOGENOM" id="CLU_026910_3_2_14"/>
<dbReference type="InParanoid" id="P35888"/>
<dbReference type="OrthoDB" id="9807019at2"/>
<dbReference type="BioCyc" id="MGEN243273:G1GJ2-564-MONOMER"/>
<dbReference type="EvolutionaryTrace" id="P35888"/>
<dbReference type="Proteomes" id="UP000000807">
    <property type="component" value="Chromosome"/>
</dbReference>
<dbReference type="GO" id="GO:0005737">
    <property type="term" value="C:cytoplasm"/>
    <property type="evidence" value="ECO:0007669"/>
    <property type="project" value="UniProtKB-SubCell"/>
</dbReference>
<dbReference type="GO" id="GO:0005886">
    <property type="term" value="C:plasma membrane"/>
    <property type="evidence" value="ECO:0000318"/>
    <property type="project" value="GO_Central"/>
</dbReference>
<dbReference type="GO" id="GO:0005524">
    <property type="term" value="F:ATP binding"/>
    <property type="evidence" value="ECO:0007669"/>
    <property type="project" value="UniProtKB-UniRule"/>
</dbReference>
<dbReference type="GO" id="GO:0016887">
    <property type="term" value="F:ATP hydrolysis activity"/>
    <property type="evidence" value="ECO:0007669"/>
    <property type="project" value="InterPro"/>
</dbReference>
<dbReference type="GO" id="GO:0003688">
    <property type="term" value="F:DNA replication origin binding"/>
    <property type="evidence" value="ECO:0000318"/>
    <property type="project" value="GO_Central"/>
</dbReference>
<dbReference type="GO" id="GO:0008289">
    <property type="term" value="F:lipid binding"/>
    <property type="evidence" value="ECO:0007669"/>
    <property type="project" value="UniProtKB-KW"/>
</dbReference>
<dbReference type="GO" id="GO:0006260">
    <property type="term" value="P:DNA replication"/>
    <property type="evidence" value="ECO:0000318"/>
    <property type="project" value="GO_Central"/>
</dbReference>
<dbReference type="GO" id="GO:0006270">
    <property type="term" value="P:DNA replication initiation"/>
    <property type="evidence" value="ECO:0000318"/>
    <property type="project" value="GO_Central"/>
</dbReference>
<dbReference type="GO" id="GO:0006275">
    <property type="term" value="P:regulation of DNA replication"/>
    <property type="evidence" value="ECO:0007669"/>
    <property type="project" value="UniProtKB-UniRule"/>
</dbReference>
<dbReference type="CDD" id="cd00009">
    <property type="entry name" value="AAA"/>
    <property type="match status" value="1"/>
</dbReference>
<dbReference type="CDD" id="cd06571">
    <property type="entry name" value="Bac_DnaA_C"/>
    <property type="match status" value="1"/>
</dbReference>
<dbReference type="FunFam" id="1.10.1750.10:FF:000015">
    <property type="match status" value="1"/>
</dbReference>
<dbReference type="Gene3D" id="1.10.1750.10">
    <property type="match status" value="1"/>
</dbReference>
<dbReference type="Gene3D" id="3.30.300.20">
    <property type="match status" value="1"/>
</dbReference>
<dbReference type="Gene3D" id="3.40.50.300">
    <property type="entry name" value="P-loop containing nucleotide triphosphate hydrolases"/>
    <property type="match status" value="1"/>
</dbReference>
<dbReference type="HAMAP" id="MF_00377">
    <property type="entry name" value="DnaA_bact"/>
    <property type="match status" value="1"/>
</dbReference>
<dbReference type="InterPro" id="IPR003593">
    <property type="entry name" value="AAA+_ATPase"/>
</dbReference>
<dbReference type="InterPro" id="IPR001957">
    <property type="entry name" value="Chromosome_initiator_DnaA"/>
</dbReference>
<dbReference type="InterPro" id="IPR020591">
    <property type="entry name" value="Chromosome_initiator_DnaA-like"/>
</dbReference>
<dbReference type="InterPro" id="IPR018312">
    <property type="entry name" value="Chromosome_initiator_DnaA_CS"/>
</dbReference>
<dbReference type="InterPro" id="IPR013159">
    <property type="entry name" value="DnaA_C"/>
</dbReference>
<dbReference type="InterPro" id="IPR013317">
    <property type="entry name" value="DnaA_dom"/>
</dbReference>
<dbReference type="InterPro" id="IPR015946">
    <property type="entry name" value="KH_dom-like_a/b"/>
</dbReference>
<dbReference type="InterPro" id="IPR027417">
    <property type="entry name" value="P-loop_NTPase"/>
</dbReference>
<dbReference type="InterPro" id="IPR010921">
    <property type="entry name" value="Trp_repressor/repl_initiator"/>
</dbReference>
<dbReference type="NCBIfam" id="TIGR00362">
    <property type="entry name" value="DnaA"/>
    <property type="match status" value="1"/>
</dbReference>
<dbReference type="NCBIfam" id="NF001154">
    <property type="entry name" value="PRK00149.3-3"/>
    <property type="match status" value="1"/>
</dbReference>
<dbReference type="PANTHER" id="PTHR30050">
    <property type="entry name" value="CHROMOSOMAL REPLICATION INITIATOR PROTEIN DNAA"/>
    <property type="match status" value="1"/>
</dbReference>
<dbReference type="PANTHER" id="PTHR30050:SF2">
    <property type="entry name" value="CHROMOSOMAL REPLICATION INITIATOR PROTEIN DNAA"/>
    <property type="match status" value="1"/>
</dbReference>
<dbReference type="Pfam" id="PF00308">
    <property type="entry name" value="Bac_DnaA"/>
    <property type="match status" value="1"/>
</dbReference>
<dbReference type="Pfam" id="PF08299">
    <property type="entry name" value="Bac_DnaA_C"/>
    <property type="match status" value="1"/>
</dbReference>
<dbReference type="PRINTS" id="PR00051">
    <property type="entry name" value="DNAA"/>
</dbReference>
<dbReference type="SMART" id="SM00382">
    <property type="entry name" value="AAA"/>
    <property type="match status" value="1"/>
</dbReference>
<dbReference type="SMART" id="SM00760">
    <property type="entry name" value="Bac_DnaA_C"/>
    <property type="match status" value="1"/>
</dbReference>
<dbReference type="SUPFAM" id="SSF52540">
    <property type="entry name" value="P-loop containing nucleoside triphosphate hydrolases"/>
    <property type="match status" value="1"/>
</dbReference>
<dbReference type="SUPFAM" id="SSF48295">
    <property type="entry name" value="TrpR-like"/>
    <property type="match status" value="1"/>
</dbReference>
<dbReference type="PROSITE" id="PS01008">
    <property type="entry name" value="DNAA"/>
    <property type="match status" value="1"/>
</dbReference>
<comment type="function">
    <text evidence="1">Plays an essential role in the initiation and regulation of chromosomal replication. ATP-DnaA binds to the origin of replication (oriC) to initiate formation of the DNA replication initiation complex once per cell cycle. Binds the DnaA box (a 9 base pair repeat at the origin) and separates the double-stranded (ds)DNA. Forms a right-handed helical filament on oriC DNA; dsDNA binds to the exterior of the filament while single-stranded (ss)DNA is stabiized in the filament's interior. The ATP-DnaA-oriC complex binds and stabilizes one strand of the AT-rich DNA unwinding element (DUE), permitting loading of DNA polymerase. After initiation quickly degrades to an ADP-DnaA complex that is not apt for DNA replication. Binds acidic phospholipids.</text>
</comment>
<comment type="subunit">
    <text evidence="1">Oligomerizes as a right-handed, spiral filament on DNA at oriC.</text>
</comment>
<comment type="subcellular location">
    <subcellularLocation>
        <location evidence="1">Cytoplasm</location>
    </subcellularLocation>
</comment>
<comment type="domain">
    <text evidence="1">Domain I is involved in oligomerization and binding regulators, domain II is flexibile and of varying length in different bacteria, domain III forms the AAA+ region, while domain IV binds dsDNA.</text>
</comment>
<comment type="similarity">
    <text evidence="1 2">Belongs to the DnaA family.</text>
</comment>
<feature type="chain" id="PRO_0000114211" description="Chromosomal replication initiator protein DnaA">
    <location>
        <begin position="1"/>
        <end position="437"/>
    </location>
</feature>
<feature type="region of interest" description="Domain I, interacts with DnaA modulators" evidence="1 3">
    <location>
        <begin position="1"/>
        <end position="72"/>
    </location>
</feature>
<feature type="region of interest" description="Domain II" evidence="1 3">
    <location>
        <begin position="72"/>
        <end position="99"/>
    </location>
</feature>
<feature type="region of interest" description="Domain III, AAA+ region" evidence="1">
    <location>
        <begin position="100"/>
        <end position="320"/>
    </location>
</feature>
<feature type="region of interest" description="Domain IV, binds dsDNA" evidence="1">
    <location>
        <begin position="321"/>
        <end position="437"/>
    </location>
</feature>
<feature type="binding site" evidence="1">
    <location>
        <position position="144"/>
    </location>
    <ligand>
        <name>ATP</name>
        <dbReference type="ChEBI" id="CHEBI:30616"/>
    </ligand>
</feature>
<feature type="binding site" evidence="1">
    <location>
        <position position="146"/>
    </location>
    <ligand>
        <name>ATP</name>
        <dbReference type="ChEBI" id="CHEBI:30616"/>
    </ligand>
</feature>
<feature type="binding site" evidence="1">
    <location>
        <position position="147"/>
    </location>
    <ligand>
        <name>ATP</name>
        <dbReference type="ChEBI" id="CHEBI:30616"/>
    </ligand>
</feature>
<feature type="binding site" evidence="1">
    <location>
        <position position="148"/>
    </location>
    <ligand>
        <name>ATP</name>
        <dbReference type="ChEBI" id="CHEBI:30616"/>
    </ligand>
</feature>
<feature type="sequence conflict" description="In Ref. 2; AAD12524." evidence="2" ref="2">
    <original>E</original>
    <variation>G</variation>
    <location>
        <position position="198"/>
    </location>
</feature>
<feature type="helix" evidence="5">
    <location>
        <begin position="2"/>
        <end position="14"/>
    </location>
</feature>
<feature type="helix" evidence="5">
    <location>
        <begin position="19"/>
        <end position="24"/>
    </location>
</feature>
<feature type="turn" evidence="5">
    <location>
        <begin position="25"/>
        <end position="28"/>
    </location>
</feature>
<feature type="strand" evidence="5">
    <location>
        <begin position="32"/>
        <end position="34"/>
    </location>
</feature>
<feature type="strand" evidence="5">
    <location>
        <begin position="36"/>
        <end position="42"/>
    </location>
</feature>
<feature type="helix" evidence="5">
    <location>
        <begin position="46"/>
        <end position="54"/>
    </location>
</feature>
<feature type="helix" evidence="5">
    <location>
        <begin position="59"/>
        <end position="62"/>
    </location>
</feature>
<feature type="turn" evidence="5">
    <location>
        <begin position="63"/>
        <end position="65"/>
    </location>
</feature>
<feature type="strand" evidence="5">
    <location>
        <begin position="71"/>
        <end position="75"/>
    </location>
</feature>
<feature type="helix" evidence="5">
    <location>
        <begin position="77"/>
        <end position="85"/>
    </location>
</feature>
<organism>
    <name type="scientific">Mycoplasma genitalium (strain ATCC 33530 / DSM 19775 / NCTC 10195 / G37)</name>
    <name type="common">Mycoplasmoides genitalium</name>
    <dbReference type="NCBI Taxonomy" id="243273"/>
    <lineage>
        <taxon>Bacteria</taxon>
        <taxon>Bacillati</taxon>
        <taxon>Mycoplasmatota</taxon>
        <taxon>Mycoplasmoidales</taxon>
        <taxon>Mycoplasmoidaceae</taxon>
        <taxon>Mycoplasmoides</taxon>
    </lineage>
</organism>
<keyword id="KW-0002">3D-structure</keyword>
<keyword id="KW-0067">ATP-binding</keyword>
<keyword id="KW-0963">Cytoplasm</keyword>
<keyword id="KW-0235">DNA replication</keyword>
<keyword id="KW-0238">DNA-binding</keyword>
<keyword id="KW-0446">Lipid-binding</keyword>
<keyword id="KW-0547">Nucleotide-binding</keyword>
<keyword id="KW-1185">Reference proteome</keyword>
<protein>
    <recommendedName>
        <fullName evidence="1">Chromosomal replication initiator protein DnaA</fullName>
    </recommendedName>
</protein>
<reference key="1">
    <citation type="journal article" date="1995" name="Science">
        <title>The minimal gene complement of Mycoplasma genitalium.</title>
        <authorList>
            <person name="Fraser C.M."/>
            <person name="Gocayne J.D."/>
            <person name="White O."/>
            <person name="Adams M.D."/>
            <person name="Clayton R.A."/>
            <person name="Fleischmann R.D."/>
            <person name="Bult C.J."/>
            <person name="Kerlavage A.R."/>
            <person name="Sutton G.G."/>
            <person name="Kelley J.M."/>
            <person name="Fritchman J.L."/>
            <person name="Weidman J.F."/>
            <person name="Small K.V."/>
            <person name="Sandusky M."/>
            <person name="Fuhrmann J.L."/>
            <person name="Nguyen D.T."/>
            <person name="Utterback T.R."/>
            <person name="Saudek D.M."/>
            <person name="Phillips C.A."/>
            <person name="Merrick J.M."/>
            <person name="Tomb J.-F."/>
            <person name="Dougherty B.A."/>
            <person name="Bott K.F."/>
            <person name="Hu P.-C."/>
            <person name="Lucier T.S."/>
            <person name="Peterson S.N."/>
            <person name="Smith H.O."/>
            <person name="Hutchison C.A. III"/>
            <person name="Venter J.C."/>
        </authorList>
    </citation>
    <scope>NUCLEOTIDE SEQUENCE [LARGE SCALE GENOMIC DNA]</scope>
    <source>
        <strain>ATCC 33530 / DSM 19775 / NCTC 10195 / G37</strain>
    </source>
</reference>
<reference key="2">
    <citation type="journal article" date="1993" name="J. Bacteriol.">
        <title>A survey of the Mycoplasma genitalium genome by using random sequencing.</title>
        <authorList>
            <person name="Peterson S.N."/>
            <person name="Hu P.-C."/>
            <person name="Bott K.F."/>
            <person name="Hutchison C.A. III"/>
        </authorList>
    </citation>
    <scope>NUCLEOTIDE SEQUENCE [GENOMIC DNA] OF 183-281 AND 286-402</scope>
    <source>
        <strain>ATCC 33530 / DSM 19775 / NCTC 10195 / G37</strain>
    </source>
</reference>
<reference evidence="4" key="3">
    <citation type="journal article" date="2007" name="J. Struct. Funct. Genomics">
        <title>NMR structure of the N-terminal domain of the replication initiator protein DnaA.</title>
        <authorList>
            <person name="Lowery T.J."/>
            <person name="Pelton J.G."/>
            <person name="Chandonia J.M."/>
            <person name="Kim R."/>
            <person name="Yokota H."/>
            <person name="Wemmer D.E."/>
        </authorList>
    </citation>
    <scope>STRUCTURE BY NMR OF 1-100</scope>
</reference>
<name>DNAA_MYCGE</name>
<sequence>MEQFNAFKSLLKKHYEKTIGFHDKYIKDINRFVFKNNVLLILLENEFARNSLNDNSEIIHLAESLYEGIKSVNFVNEQDFFFNLAKLEENSRDTLYQNSGLSKNYTFQNFVISEGNKRAYEAGVRLAETQDNEFSPLFIYGETGLGKTHLLQAIGNEKFRNFPNARVKYVVSSDFAQEVVDAFYQRDKGIEKLKKNYENLDLVLIDDTQIFGRKEKTLEILFNIFNNLVLNKKQIVLVSDKAPDELIDIDARMISRFKSGLLLKIEKHNLSSLCEILTVKLKEKDPNIQITNEARHDAAQISGNDVRALNGIATKLLFFAKTSKQNLINTENLKEILFEEFEKFHKKSFDPYLLIENVCRRFNVPMDSVLSENRKAELVRVRDVCNYLLRQKYNMQFQQIGKIFKRSHSSVLMAVKRVAKMIENDSSLRDVITSLVI</sequence>
<accession>P35888</accession>
<accession>Q49363</accession>